<name>RS14_SALHS</name>
<protein>
    <recommendedName>
        <fullName evidence="1">Small ribosomal subunit protein uS14</fullName>
    </recommendedName>
    <alternativeName>
        <fullName evidence="2">30S ribosomal protein S14</fullName>
    </alternativeName>
</protein>
<dbReference type="EMBL" id="CP001120">
    <property type="protein sequence ID" value="ACF70199.1"/>
    <property type="molecule type" value="Genomic_DNA"/>
</dbReference>
<dbReference type="RefSeq" id="WP_001118932.1">
    <property type="nucleotide sequence ID" value="NC_011083.1"/>
</dbReference>
<dbReference type="SMR" id="B4TKK2"/>
<dbReference type="GeneID" id="66757762"/>
<dbReference type="KEGG" id="seh:SeHA_C3731"/>
<dbReference type="HOGENOM" id="CLU_139869_0_1_6"/>
<dbReference type="Proteomes" id="UP000001866">
    <property type="component" value="Chromosome"/>
</dbReference>
<dbReference type="GO" id="GO:0005737">
    <property type="term" value="C:cytoplasm"/>
    <property type="evidence" value="ECO:0007669"/>
    <property type="project" value="UniProtKB-ARBA"/>
</dbReference>
<dbReference type="GO" id="GO:0015935">
    <property type="term" value="C:small ribosomal subunit"/>
    <property type="evidence" value="ECO:0007669"/>
    <property type="project" value="TreeGrafter"/>
</dbReference>
<dbReference type="GO" id="GO:0019843">
    <property type="term" value="F:rRNA binding"/>
    <property type="evidence" value="ECO:0007669"/>
    <property type="project" value="UniProtKB-UniRule"/>
</dbReference>
<dbReference type="GO" id="GO:0003735">
    <property type="term" value="F:structural constituent of ribosome"/>
    <property type="evidence" value="ECO:0007669"/>
    <property type="project" value="InterPro"/>
</dbReference>
<dbReference type="GO" id="GO:0006412">
    <property type="term" value="P:translation"/>
    <property type="evidence" value="ECO:0007669"/>
    <property type="project" value="UniProtKB-UniRule"/>
</dbReference>
<dbReference type="FunFam" id="1.10.287.1480:FF:000001">
    <property type="entry name" value="30S ribosomal protein S14"/>
    <property type="match status" value="1"/>
</dbReference>
<dbReference type="Gene3D" id="1.10.287.1480">
    <property type="match status" value="1"/>
</dbReference>
<dbReference type="HAMAP" id="MF_00537">
    <property type="entry name" value="Ribosomal_uS14_1"/>
    <property type="match status" value="1"/>
</dbReference>
<dbReference type="InterPro" id="IPR001209">
    <property type="entry name" value="Ribosomal_uS14"/>
</dbReference>
<dbReference type="InterPro" id="IPR023036">
    <property type="entry name" value="Ribosomal_uS14_bac/plastid"/>
</dbReference>
<dbReference type="InterPro" id="IPR018271">
    <property type="entry name" value="Ribosomal_uS14_CS"/>
</dbReference>
<dbReference type="NCBIfam" id="NF006477">
    <property type="entry name" value="PRK08881.1"/>
    <property type="match status" value="1"/>
</dbReference>
<dbReference type="PANTHER" id="PTHR19836">
    <property type="entry name" value="30S RIBOSOMAL PROTEIN S14"/>
    <property type="match status" value="1"/>
</dbReference>
<dbReference type="PANTHER" id="PTHR19836:SF19">
    <property type="entry name" value="SMALL RIBOSOMAL SUBUNIT PROTEIN US14M"/>
    <property type="match status" value="1"/>
</dbReference>
<dbReference type="Pfam" id="PF00253">
    <property type="entry name" value="Ribosomal_S14"/>
    <property type="match status" value="1"/>
</dbReference>
<dbReference type="SUPFAM" id="SSF57716">
    <property type="entry name" value="Glucocorticoid receptor-like (DNA-binding domain)"/>
    <property type="match status" value="1"/>
</dbReference>
<dbReference type="PROSITE" id="PS00527">
    <property type="entry name" value="RIBOSOMAL_S14"/>
    <property type="match status" value="1"/>
</dbReference>
<reference key="1">
    <citation type="journal article" date="2011" name="J. Bacteriol.">
        <title>Comparative genomics of 28 Salmonella enterica isolates: evidence for CRISPR-mediated adaptive sublineage evolution.</title>
        <authorList>
            <person name="Fricke W.F."/>
            <person name="Mammel M.K."/>
            <person name="McDermott P.F."/>
            <person name="Tartera C."/>
            <person name="White D.G."/>
            <person name="Leclerc J.E."/>
            <person name="Ravel J."/>
            <person name="Cebula T.A."/>
        </authorList>
    </citation>
    <scope>NUCLEOTIDE SEQUENCE [LARGE SCALE GENOMIC DNA]</scope>
    <source>
        <strain>SL476</strain>
    </source>
</reference>
<comment type="function">
    <text evidence="1">Binds 16S rRNA, required for the assembly of 30S particles and may also be responsible for determining the conformation of the 16S rRNA at the A site.</text>
</comment>
<comment type="subunit">
    <text evidence="1">Part of the 30S ribosomal subunit. Contacts proteins S3 and S10.</text>
</comment>
<comment type="similarity">
    <text evidence="1">Belongs to the universal ribosomal protein uS14 family.</text>
</comment>
<sequence length="101" mass="11609">MAKQSMKAREVKRVALADKYFAKRAELKAIISDVNATDEDRWNAVLKLQTLPRDSSPSRQRNRCRQTGRPHAFLRKFGLSRIKVREAAMRGEIPGLKKASW</sequence>
<gene>
    <name evidence="1" type="primary">rpsN</name>
    <name type="ordered locus">SeHA_C3731</name>
</gene>
<feature type="chain" id="PRO_1000128560" description="Small ribosomal subunit protein uS14">
    <location>
        <begin position="1"/>
        <end position="101"/>
    </location>
</feature>
<proteinExistence type="inferred from homology"/>
<evidence type="ECO:0000255" key="1">
    <source>
        <dbReference type="HAMAP-Rule" id="MF_00537"/>
    </source>
</evidence>
<evidence type="ECO:0000305" key="2"/>
<organism>
    <name type="scientific">Salmonella heidelberg (strain SL476)</name>
    <dbReference type="NCBI Taxonomy" id="454169"/>
    <lineage>
        <taxon>Bacteria</taxon>
        <taxon>Pseudomonadati</taxon>
        <taxon>Pseudomonadota</taxon>
        <taxon>Gammaproteobacteria</taxon>
        <taxon>Enterobacterales</taxon>
        <taxon>Enterobacteriaceae</taxon>
        <taxon>Salmonella</taxon>
    </lineage>
</organism>
<keyword id="KW-0687">Ribonucleoprotein</keyword>
<keyword id="KW-0689">Ribosomal protein</keyword>
<keyword id="KW-0694">RNA-binding</keyword>
<keyword id="KW-0699">rRNA-binding</keyword>
<accession>B4TKK2</accession>